<sequence length="362" mass="40047">MTAAAELRPRRVRPVRIWLTLVAMLIAVMVLVGGATRLTESGLSIVEWKPVTGTLPPLNDAQWRDAFEGYKTIPQYRELNAGMTLGEFKTIFWWEWGHRLLGRVIGIAYLLPLLWFLWRGAIAPEWKRALWAIFALGALQGAVGWWMVASGLSQRTEVSQVRLAIHLTLALVIYAAIVWTLRRLAGRPPIVAAARLKFTAIALLALTLVQLFLGALVAGLRAGRMFNTWPLIDGALIPEASRLWFEQPWWKNLFDNHLTVQFDHRMMAYALWALAAWHAIDALRARAGGAAGGALWLFAALSLQAVLGILTLLYQVPIGLALAHQAVGIVVLTLAVLQVERLTASKSKEAPRVMPAPASQRG</sequence>
<keyword id="KW-1003">Cell membrane</keyword>
<keyword id="KW-0350">Heme biosynthesis</keyword>
<keyword id="KW-0408">Iron</keyword>
<keyword id="KW-0472">Membrane</keyword>
<keyword id="KW-0479">Metal-binding</keyword>
<keyword id="KW-0560">Oxidoreductase</keyword>
<keyword id="KW-0812">Transmembrane</keyword>
<keyword id="KW-1133">Transmembrane helix</keyword>
<dbReference type="EC" id="1.17.99.9" evidence="1"/>
<dbReference type="EMBL" id="CP000283">
    <property type="protein sequence ID" value="ABE39930.1"/>
    <property type="molecule type" value="Genomic_DNA"/>
</dbReference>
<dbReference type="SMR" id="Q136Q9"/>
<dbReference type="STRING" id="316057.RPD_2701"/>
<dbReference type="KEGG" id="rpd:RPD_2701"/>
<dbReference type="eggNOG" id="COG1612">
    <property type="taxonomic scope" value="Bacteria"/>
</dbReference>
<dbReference type="HOGENOM" id="CLU_017627_0_0_5"/>
<dbReference type="BioCyc" id="RPAL316057:RPD_RS13585-MONOMER"/>
<dbReference type="UniPathway" id="UPA00269">
    <property type="reaction ID" value="UER00713"/>
</dbReference>
<dbReference type="Proteomes" id="UP000001818">
    <property type="component" value="Chromosome"/>
</dbReference>
<dbReference type="GO" id="GO:0005886">
    <property type="term" value="C:plasma membrane"/>
    <property type="evidence" value="ECO:0007669"/>
    <property type="project" value="UniProtKB-SubCell"/>
</dbReference>
<dbReference type="GO" id="GO:0046872">
    <property type="term" value="F:metal ion binding"/>
    <property type="evidence" value="ECO:0007669"/>
    <property type="project" value="UniProtKB-KW"/>
</dbReference>
<dbReference type="GO" id="GO:0016653">
    <property type="term" value="F:oxidoreductase activity, acting on NAD(P)H, heme protein as acceptor"/>
    <property type="evidence" value="ECO:0007669"/>
    <property type="project" value="InterPro"/>
</dbReference>
<dbReference type="GO" id="GO:0006784">
    <property type="term" value="P:heme A biosynthetic process"/>
    <property type="evidence" value="ECO:0007669"/>
    <property type="project" value="UniProtKB-UniRule"/>
</dbReference>
<dbReference type="HAMAP" id="MF_01665">
    <property type="entry name" value="HemeA_synth_type2"/>
    <property type="match status" value="1"/>
</dbReference>
<dbReference type="InterPro" id="IPR003780">
    <property type="entry name" value="COX15/CtaA_fam"/>
</dbReference>
<dbReference type="InterPro" id="IPR023754">
    <property type="entry name" value="HemeA_Synthase_type2"/>
</dbReference>
<dbReference type="PANTHER" id="PTHR23289">
    <property type="entry name" value="CYTOCHROME C OXIDASE ASSEMBLY PROTEIN COX15"/>
    <property type="match status" value="1"/>
</dbReference>
<dbReference type="PANTHER" id="PTHR23289:SF2">
    <property type="entry name" value="CYTOCHROME C OXIDASE ASSEMBLY PROTEIN COX15 HOMOLOG"/>
    <property type="match status" value="1"/>
</dbReference>
<dbReference type="Pfam" id="PF02628">
    <property type="entry name" value="COX15-CtaA"/>
    <property type="match status" value="1"/>
</dbReference>
<reference key="1">
    <citation type="submission" date="2006-03" db="EMBL/GenBank/DDBJ databases">
        <title>Complete sequence of Rhodopseudomonas palustris BisB5.</title>
        <authorList>
            <consortium name="US DOE Joint Genome Institute"/>
            <person name="Copeland A."/>
            <person name="Lucas S."/>
            <person name="Lapidus A."/>
            <person name="Barry K."/>
            <person name="Detter J.C."/>
            <person name="Glavina del Rio T."/>
            <person name="Hammon N."/>
            <person name="Israni S."/>
            <person name="Dalin E."/>
            <person name="Tice H."/>
            <person name="Pitluck S."/>
            <person name="Chain P."/>
            <person name="Malfatti S."/>
            <person name="Shin M."/>
            <person name="Vergez L."/>
            <person name="Schmutz J."/>
            <person name="Larimer F."/>
            <person name="Land M."/>
            <person name="Hauser L."/>
            <person name="Pelletier D.A."/>
            <person name="Kyrpides N."/>
            <person name="Lykidis A."/>
            <person name="Oda Y."/>
            <person name="Harwood C.S."/>
            <person name="Richardson P."/>
        </authorList>
    </citation>
    <scope>NUCLEOTIDE SEQUENCE [LARGE SCALE GENOMIC DNA]</scope>
    <source>
        <strain>BisB5</strain>
    </source>
</reference>
<protein>
    <recommendedName>
        <fullName evidence="1">Heme A synthase</fullName>
        <shortName evidence="1">HAS</shortName>
        <ecNumber evidence="1">1.17.99.9</ecNumber>
    </recommendedName>
    <alternativeName>
        <fullName evidence="1">Cytochrome aa3-controlling protein</fullName>
    </alternativeName>
</protein>
<name>CTAA_RHOPS</name>
<organism>
    <name type="scientific">Rhodopseudomonas palustris (strain BisB5)</name>
    <dbReference type="NCBI Taxonomy" id="316057"/>
    <lineage>
        <taxon>Bacteria</taxon>
        <taxon>Pseudomonadati</taxon>
        <taxon>Pseudomonadota</taxon>
        <taxon>Alphaproteobacteria</taxon>
        <taxon>Hyphomicrobiales</taxon>
        <taxon>Nitrobacteraceae</taxon>
        <taxon>Rhodopseudomonas</taxon>
    </lineage>
</organism>
<evidence type="ECO:0000255" key="1">
    <source>
        <dbReference type="HAMAP-Rule" id="MF_01665"/>
    </source>
</evidence>
<accession>Q136Q9</accession>
<gene>
    <name evidence="1" type="primary">ctaA</name>
    <name type="ordered locus">RPD_2701</name>
</gene>
<comment type="function">
    <text evidence="1">Catalyzes the conversion of heme O to heme A by two successive hydroxylations of the methyl group at C8. The first hydroxylation forms heme I, the second hydroxylation results in an unstable dihydroxymethyl group, which spontaneously dehydrates, resulting in the formyl group of heme A.</text>
</comment>
<comment type="catalytic activity">
    <reaction evidence="1">
        <text>Fe(II)-heme o + 2 A + H2O = Fe(II)-heme a + 2 AH2</text>
        <dbReference type="Rhea" id="RHEA:63388"/>
        <dbReference type="ChEBI" id="CHEBI:13193"/>
        <dbReference type="ChEBI" id="CHEBI:15377"/>
        <dbReference type="ChEBI" id="CHEBI:17499"/>
        <dbReference type="ChEBI" id="CHEBI:60530"/>
        <dbReference type="ChEBI" id="CHEBI:61715"/>
        <dbReference type="EC" id="1.17.99.9"/>
    </reaction>
    <physiologicalReaction direction="left-to-right" evidence="1">
        <dbReference type="Rhea" id="RHEA:63389"/>
    </physiologicalReaction>
</comment>
<comment type="cofactor">
    <cofactor evidence="1">
        <name>heme b</name>
        <dbReference type="ChEBI" id="CHEBI:60344"/>
    </cofactor>
</comment>
<comment type="pathway">
    <text evidence="1">Porphyrin-containing compound metabolism; heme A biosynthesis; heme A from heme O: step 1/1.</text>
</comment>
<comment type="subunit">
    <text evidence="1">Interacts with CtaB.</text>
</comment>
<comment type="subcellular location">
    <subcellularLocation>
        <location evidence="1">Cell membrane</location>
        <topology evidence="1">Multi-pass membrane protein</topology>
    </subcellularLocation>
</comment>
<comment type="similarity">
    <text evidence="1">Belongs to the COX15/CtaA family. Type 2 subfamily.</text>
</comment>
<proteinExistence type="inferred from homology"/>
<feature type="chain" id="PRO_0000349069" description="Heme A synthase">
    <location>
        <begin position="1"/>
        <end position="362"/>
    </location>
</feature>
<feature type="transmembrane region" description="Helical" evidence="1">
    <location>
        <begin position="15"/>
        <end position="35"/>
    </location>
</feature>
<feature type="transmembrane region" description="Helical" evidence="1">
    <location>
        <begin position="104"/>
        <end position="124"/>
    </location>
</feature>
<feature type="transmembrane region" description="Helical" evidence="1">
    <location>
        <begin position="129"/>
        <end position="149"/>
    </location>
</feature>
<feature type="transmembrane region" description="Helical" evidence="1">
    <location>
        <begin position="161"/>
        <end position="181"/>
    </location>
</feature>
<feature type="transmembrane region" description="Helical" evidence="1">
    <location>
        <begin position="200"/>
        <end position="220"/>
    </location>
</feature>
<feature type="transmembrane region" description="Helical" evidence="1">
    <location>
        <begin position="266"/>
        <end position="285"/>
    </location>
</feature>
<feature type="transmembrane region" description="Helical" evidence="1">
    <location>
        <begin position="293"/>
        <end position="313"/>
    </location>
</feature>
<feature type="transmembrane region" description="Helical" evidence="1">
    <location>
        <begin position="316"/>
        <end position="336"/>
    </location>
</feature>
<feature type="binding site" description="axial binding residue" evidence="1">
    <location>
        <position position="264"/>
    </location>
    <ligand>
        <name>heme</name>
        <dbReference type="ChEBI" id="CHEBI:30413"/>
    </ligand>
    <ligandPart>
        <name>Fe</name>
        <dbReference type="ChEBI" id="CHEBI:18248"/>
    </ligandPart>
</feature>
<feature type="binding site" description="axial binding residue" evidence="1">
    <location>
        <position position="324"/>
    </location>
    <ligand>
        <name>heme</name>
        <dbReference type="ChEBI" id="CHEBI:30413"/>
    </ligand>
    <ligandPart>
        <name>Fe</name>
        <dbReference type="ChEBI" id="CHEBI:18248"/>
    </ligandPart>
</feature>